<sequence>MDVARSEFFETGTPVACTSCQARHGVVCGALSKGQLRELNRHSLRRKIEAGCEIIAQGSESSFYSNIMRGVMKLCKVMPDGRQQIVGLQFAPDFVGRPFVRESTLSAEAATDSEICVFPRNLLDRMISETPELQRSLHDQALKELDAAREWMLTLGRRTAEEKVASLLHLIATHAEPQTATSTAFDLPLSRAEIADFLGLTIETVSRQMTRLRKIGVIRIENFRHIIVPDMDELERMISA</sequence>
<proteinExistence type="predicted"/>
<gene>
    <name type="primary">fnrN</name>
</gene>
<organism>
    <name type="scientific">Rhizobium leguminosarum bv. viciae</name>
    <dbReference type="NCBI Taxonomy" id="387"/>
    <lineage>
        <taxon>Bacteria</taxon>
        <taxon>Pseudomonadati</taxon>
        <taxon>Pseudomonadota</taxon>
        <taxon>Alphaproteobacteria</taxon>
        <taxon>Hyphomicrobiales</taxon>
        <taxon>Rhizobiaceae</taxon>
        <taxon>Rhizobium/Agrobacterium group</taxon>
        <taxon>Rhizobium</taxon>
    </lineage>
</organism>
<comment type="function">
    <text>Promotes the microaerobic and symbiotic induction of fixN, possibly by binding to the FNR consensus binding site upstream of fixN.</text>
</comment>
<comment type="miscellaneous">
    <text>Possesses 4 cysteines which may bind a metal ion (possibly iron).</text>
</comment>
<evidence type="ECO:0000250" key="1"/>
<evidence type="ECO:0000255" key="2">
    <source>
        <dbReference type="PROSITE-ProRule" id="PRU00387"/>
    </source>
</evidence>
<feature type="chain" id="PRO_0000100159" description="Probable transcriptional activator">
    <location>
        <begin position="1"/>
        <end position="240"/>
    </location>
</feature>
<feature type="domain" description="HTH crp-type" evidence="2">
    <location>
        <begin position="158"/>
        <end position="232"/>
    </location>
</feature>
<feature type="DNA-binding region" description="H-T-H motif" evidence="2">
    <location>
        <begin position="191"/>
        <end position="210"/>
    </location>
</feature>
<feature type="region of interest" description="Essential for the oxygen-regulated activity" evidence="1">
    <location>
        <begin position="17"/>
        <end position="28"/>
    </location>
</feature>
<dbReference type="EMBL" id="X55788">
    <property type="protein sequence ID" value="CAA39312.1"/>
    <property type="molecule type" value="Genomic_DNA"/>
</dbReference>
<dbReference type="PIR" id="S11951">
    <property type="entry name" value="S11951"/>
</dbReference>
<dbReference type="RefSeq" id="WP_011652344.1">
    <property type="nucleotide sequence ID" value="NZ_WIEL01000004.1"/>
</dbReference>
<dbReference type="SMR" id="P24290"/>
<dbReference type="OMA" id="VWQVYRG"/>
<dbReference type="GO" id="GO:0005829">
    <property type="term" value="C:cytosol"/>
    <property type="evidence" value="ECO:0007669"/>
    <property type="project" value="TreeGrafter"/>
</dbReference>
<dbReference type="GO" id="GO:0003677">
    <property type="term" value="F:DNA binding"/>
    <property type="evidence" value="ECO:0007669"/>
    <property type="project" value="UniProtKB-KW"/>
</dbReference>
<dbReference type="GO" id="GO:0003700">
    <property type="term" value="F:DNA-binding transcription factor activity"/>
    <property type="evidence" value="ECO:0007669"/>
    <property type="project" value="InterPro"/>
</dbReference>
<dbReference type="GO" id="GO:0009399">
    <property type="term" value="P:nitrogen fixation"/>
    <property type="evidence" value="ECO:0007669"/>
    <property type="project" value="UniProtKB-KW"/>
</dbReference>
<dbReference type="CDD" id="cd00038">
    <property type="entry name" value="CAP_ED"/>
    <property type="match status" value="1"/>
</dbReference>
<dbReference type="CDD" id="cd00092">
    <property type="entry name" value="HTH_CRP"/>
    <property type="match status" value="1"/>
</dbReference>
<dbReference type="FunFam" id="1.10.10.10:FF:000028">
    <property type="entry name" value="Fumarate/nitrate reduction transcriptional regulator Fnr"/>
    <property type="match status" value="1"/>
</dbReference>
<dbReference type="Gene3D" id="2.60.120.10">
    <property type="entry name" value="Jelly Rolls"/>
    <property type="match status" value="1"/>
</dbReference>
<dbReference type="Gene3D" id="1.10.10.10">
    <property type="entry name" value="Winged helix-like DNA-binding domain superfamily/Winged helix DNA-binding domain"/>
    <property type="match status" value="1"/>
</dbReference>
<dbReference type="InterPro" id="IPR000595">
    <property type="entry name" value="cNMP-bd_dom"/>
</dbReference>
<dbReference type="InterPro" id="IPR018490">
    <property type="entry name" value="cNMP-bd_dom_sf"/>
</dbReference>
<dbReference type="InterPro" id="IPR050397">
    <property type="entry name" value="Env_Response_Regulators"/>
</dbReference>
<dbReference type="InterPro" id="IPR012318">
    <property type="entry name" value="HTH_CRP"/>
</dbReference>
<dbReference type="InterPro" id="IPR014710">
    <property type="entry name" value="RmlC-like_jellyroll"/>
</dbReference>
<dbReference type="InterPro" id="IPR018335">
    <property type="entry name" value="Tscrpt_reg_HTH_Crp-type_CS"/>
</dbReference>
<dbReference type="InterPro" id="IPR036388">
    <property type="entry name" value="WH-like_DNA-bd_sf"/>
</dbReference>
<dbReference type="InterPro" id="IPR036390">
    <property type="entry name" value="WH_DNA-bd_sf"/>
</dbReference>
<dbReference type="PANTHER" id="PTHR24567">
    <property type="entry name" value="CRP FAMILY TRANSCRIPTIONAL REGULATORY PROTEIN"/>
    <property type="match status" value="1"/>
</dbReference>
<dbReference type="PANTHER" id="PTHR24567:SF75">
    <property type="entry name" value="FUMARATE AND NITRATE REDUCTION REGULATORY PROTEIN"/>
    <property type="match status" value="1"/>
</dbReference>
<dbReference type="Pfam" id="PF00027">
    <property type="entry name" value="cNMP_binding"/>
    <property type="match status" value="1"/>
</dbReference>
<dbReference type="Pfam" id="PF13545">
    <property type="entry name" value="HTH_Crp_2"/>
    <property type="match status" value="1"/>
</dbReference>
<dbReference type="PRINTS" id="PR00034">
    <property type="entry name" value="HTHCRP"/>
</dbReference>
<dbReference type="SMART" id="SM00100">
    <property type="entry name" value="cNMP"/>
    <property type="match status" value="1"/>
</dbReference>
<dbReference type="SMART" id="SM00419">
    <property type="entry name" value="HTH_CRP"/>
    <property type="match status" value="1"/>
</dbReference>
<dbReference type="SUPFAM" id="SSF51206">
    <property type="entry name" value="cAMP-binding domain-like"/>
    <property type="match status" value="1"/>
</dbReference>
<dbReference type="SUPFAM" id="SSF46785">
    <property type="entry name" value="Winged helix' DNA-binding domain"/>
    <property type="match status" value="1"/>
</dbReference>
<dbReference type="PROSITE" id="PS00042">
    <property type="entry name" value="HTH_CRP_1"/>
    <property type="match status" value="1"/>
</dbReference>
<dbReference type="PROSITE" id="PS51063">
    <property type="entry name" value="HTH_CRP_2"/>
    <property type="match status" value="1"/>
</dbReference>
<protein>
    <recommendedName>
        <fullName>Probable transcriptional activator</fullName>
    </recommendedName>
    <alternativeName>
        <fullName>ORF-240</fullName>
    </alternativeName>
</protein>
<name>FNRN_RHILV</name>
<accession>P24290</accession>
<reference key="1">
    <citation type="journal article" date="1990" name="Mol. Gen. Genet.">
        <title>An Fnr-like protein encoded in Rhizobium leguminosarum biovar viciae shows structural and functional homology to Rhizobium meliloti FixK.</title>
        <authorList>
            <person name="Colonna-Romano S."/>
            <person name="Arnold W."/>
            <person name="Schlueter A."/>
            <person name="Boistard P."/>
            <person name="Puehler A."/>
            <person name="Priefer U.B."/>
        </authorList>
    </citation>
    <scope>NUCLEOTIDE SEQUENCE [GENOMIC DNA]</scope>
    <source>
        <strain>VF39</strain>
    </source>
</reference>
<keyword id="KW-0010">Activator</keyword>
<keyword id="KW-0238">DNA-binding</keyword>
<keyword id="KW-0535">Nitrogen fixation</keyword>
<keyword id="KW-0804">Transcription</keyword>
<keyword id="KW-0805">Transcription regulation</keyword>